<gene>
    <name type="ORF">BN863_22010</name>
</gene>
<reference key="1">
    <citation type="journal article" date="2013" name="Appl. Environ. Microbiol.">
        <title>The genome of the alga-associated marine flavobacterium Formosa agariphila KMM 3901T reveals a broad potential for degradation of algal polysaccharides.</title>
        <authorList>
            <person name="Mann A.J."/>
            <person name="Hahnke R.L."/>
            <person name="Huang S."/>
            <person name="Werner J."/>
            <person name="Xing P."/>
            <person name="Barbeyron T."/>
            <person name="Huettel B."/>
            <person name="Stueber K."/>
            <person name="Reinhardt R."/>
            <person name="Harder J."/>
            <person name="Gloeckner F.O."/>
            <person name="Amann R.I."/>
            <person name="Teeling H."/>
        </authorList>
    </citation>
    <scope>NUCLEOTIDE SEQUENCE [LARGE SCALE GENOMIC DNA]</scope>
    <source>
        <strain>DSM 15362 / KCTC 12365 / LMG 23005 / KMM 3901 / M-2Alg 35-1</strain>
    </source>
</reference>
<reference key="2">
    <citation type="journal article" date="2019" name="Nat. Chem. Biol.">
        <title>A marine bacterial enzymatic cascade degrades the algal polysaccharide ulvan.</title>
        <authorList>
            <person name="Reisky L."/>
            <person name="Prechoux A."/>
            <person name="Zuehlke M.K."/>
            <person name="Baeumgen M."/>
            <person name="Robb C.S."/>
            <person name="Gerlach N."/>
            <person name="Roret T."/>
            <person name="Stanetty C."/>
            <person name="Larocque R."/>
            <person name="Michel G."/>
            <person name="Song T."/>
            <person name="Markert S."/>
            <person name="Unfried F."/>
            <person name="Mihovilovic M.D."/>
            <person name="Trautwein-Schult A."/>
            <person name="Becher D."/>
            <person name="Schweder T."/>
            <person name="Bornscheuer U.T."/>
            <person name="Hehemann J.H."/>
        </authorList>
    </citation>
    <scope>FUNCTION</scope>
    <scope>CATALYTIC ACTIVITY</scope>
    <scope>SUBCELLULAR LOCATION</scope>
    <scope>INDUCTION</scope>
</reference>
<keyword id="KW-0106">Calcium</keyword>
<keyword id="KW-0378">Hydrolase</keyword>
<keyword id="KW-0479">Metal-binding</keyword>
<keyword id="KW-0574">Periplasm</keyword>
<keyword id="KW-1185">Reference proteome</keyword>
<keyword id="KW-0732">Signal</keyword>
<comment type="function">
    <text evidence="3 6">Sulfatase involved in ulvan degradation (PubMed:31285597). Ulvan is the main polysaccharide component of the Ulvales (green seaweed) cell wall. It is composed of disaccharide building blocks comprising 3-sulfated rhamnose (Rha3S) linked to D-glucuronic acid (GlcA), L-iduronic acid (IduA), or D-xylose (Xyl) (Probable).</text>
</comment>
<comment type="cofactor">
    <cofactor evidence="1">
        <name>Ca(2+)</name>
        <dbReference type="ChEBI" id="CHEBI:29108"/>
    </cofactor>
    <text evidence="1">Binds 1 Ca(2+) ion per subunit.</text>
</comment>
<comment type="subcellular location">
    <subcellularLocation>
        <location evidence="6">Periplasm</location>
    </subcellularLocation>
</comment>
<comment type="induction">
    <text evidence="3">By rhamnose.</text>
</comment>
<comment type="PTM">
    <text evidence="1">The conversion to 3-oxoalanine (also known as C-formylglycine, FGly), of a serine or cysteine residue in prokaryotes and of a cysteine residue in eukaryotes, is critical for catalytic activity. This post-translational modification is severely defective in multiple sulfatase deficiency (MSD).</text>
</comment>
<comment type="similarity">
    <text evidence="5">Belongs to the sulfatase family.</text>
</comment>
<accession>T2KN71</accession>
<name>PLH12_FORAG</name>
<protein>
    <recommendedName>
        <fullName evidence="5">Ulvan-active sulfatase</fullName>
        <ecNumber evidence="3">3.1.6.-</ecNumber>
    </recommendedName>
    <alternativeName>
        <fullName evidence="4">Arylsulfatase</fullName>
    </alternativeName>
    <alternativeName>
        <fullName evidence="4">Polysaccharide utilization locus H protein P12</fullName>
        <shortName>PUL H protein P12</shortName>
    </alternativeName>
    <alternativeName>
        <fullName evidence="5">Sulfatase family S1 subfamily 8 protein P12</fullName>
        <shortName evidence="4">P12_S1_8</shortName>
    </alternativeName>
</protein>
<dbReference type="EC" id="3.1.6.-" evidence="3"/>
<dbReference type="EMBL" id="HG315671">
    <property type="protein sequence ID" value="CDF79913.1"/>
    <property type="molecule type" value="Genomic_DNA"/>
</dbReference>
<dbReference type="RefSeq" id="WP_038530503.1">
    <property type="nucleotide sequence ID" value="NZ_HG315671.1"/>
</dbReference>
<dbReference type="SMR" id="T2KN71"/>
<dbReference type="STRING" id="1347342.BN863_22010"/>
<dbReference type="PATRIC" id="fig|1347342.6.peg.2208"/>
<dbReference type="eggNOG" id="COG3119">
    <property type="taxonomic scope" value="Bacteria"/>
</dbReference>
<dbReference type="HOGENOM" id="CLU_006332_7_3_10"/>
<dbReference type="Proteomes" id="UP000016160">
    <property type="component" value="Chromosome"/>
</dbReference>
<dbReference type="GO" id="GO:0042597">
    <property type="term" value="C:periplasmic space"/>
    <property type="evidence" value="ECO:0007669"/>
    <property type="project" value="UniProtKB-SubCell"/>
</dbReference>
<dbReference type="GO" id="GO:0016787">
    <property type="term" value="F:hydrolase activity"/>
    <property type="evidence" value="ECO:0007669"/>
    <property type="project" value="UniProtKB-KW"/>
</dbReference>
<dbReference type="GO" id="GO:0046872">
    <property type="term" value="F:metal ion binding"/>
    <property type="evidence" value="ECO:0007669"/>
    <property type="project" value="UniProtKB-KW"/>
</dbReference>
<dbReference type="CDD" id="cd16027">
    <property type="entry name" value="SGSH"/>
    <property type="match status" value="1"/>
</dbReference>
<dbReference type="Gene3D" id="3.40.720.10">
    <property type="entry name" value="Alkaline Phosphatase, subunit A"/>
    <property type="match status" value="1"/>
</dbReference>
<dbReference type="InterPro" id="IPR017850">
    <property type="entry name" value="Alkaline_phosphatase_core_sf"/>
</dbReference>
<dbReference type="InterPro" id="IPR052701">
    <property type="entry name" value="GAG_Ulvan_Degrading_Sulfatases"/>
</dbReference>
<dbReference type="InterPro" id="IPR024607">
    <property type="entry name" value="Sulfatase_CS"/>
</dbReference>
<dbReference type="InterPro" id="IPR000917">
    <property type="entry name" value="Sulfatase_N"/>
</dbReference>
<dbReference type="PANTHER" id="PTHR43751">
    <property type="entry name" value="SULFATASE"/>
    <property type="match status" value="1"/>
</dbReference>
<dbReference type="PANTHER" id="PTHR43751:SF1">
    <property type="entry name" value="SULFATASE ATSG-RELATED"/>
    <property type="match status" value="1"/>
</dbReference>
<dbReference type="Pfam" id="PF00884">
    <property type="entry name" value="Sulfatase"/>
    <property type="match status" value="1"/>
</dbReference>
<dbReference type="SUPFAM" id="SSF53649">
    <property type="entry name" value="Alkaline phosphatase-like"/>
    <property type="match status" value="1"/>
</dbReference>
<dbReference type="PROSITE" id="PS00523">
    <property type="entry name" value="SULFATASE_1"/>
    <property type="match status" value="1"/>
</dbReference>
<evidence type="ECO:0000250" key="1">
    <source>
        <dbReference type="UniProtKB" id="P51688"/>
    </source>
</evidence>
<evidence type="ECO:0000255" key="2"/>
<evidence type="ECO:0000269" key="3">
    <source>
    </source>
</evidence>
<evidence type="ECO:0000303" key="4">
    <source>
    </source>
</evidence>
<evidence type="ECO:0000305" key="5"/>
<evidence type="ECO:0000305" key="6">
    <source>
    </source>
</evidence>
<organism>
    <name type="scientific">Formosa agariphila (strain DSM 15362 / KCTC 12365 / LMG 23005 / KMM 3901 / M-2Alg 35-1)</name>
    <dbReference type="NCBI Taxonomy" id="1347342"/>
    <lineage>
        <taxon>Bacteria</taxon>
        <taxon>Pseudomonadati</taxon>
        <taxon>Bacteroidota</taxon>
        <taxon>Flavobacteriia</taxon>
        <taxon>Flavobacteriales</taxon>
        <taxon>Flavobacteriaceae</taxon>
        <taxon>Formosa</taxon>
    </lineage>
</organism>
<proteinExistence type="evidence at protein level"/>
<feature type="signal peptide" evidence="2">
    <location>
        <begin position="1"/>
        <end position="22"/>
    </location>
</feature>
<feature type="chain" id="PRO_0000448335" description="Ulvan-active sulfatase">
    <location>
        <begin position="23"/>
        <end position="498"/>
    </location>
</feature>
<feature type="active site" description="Nucleophile" evidence="1">
    <location>
        <position position="95"/>
    </location>
</feature>
<feature type="binding site" evidence="1">
    <location>
        <position position="55"/>
    </location>
    <ligand>
        <name>Ca(2+)</name>
        <dbReference type="ChEBI" id="CHEBI:29108"/>
    </ligand>
</feature>
<feature type="binding site" evidence="1">
    <location>
        <position position="56"/>
    </location>
    <ligand>
        <name>Ca(2+)</name>
        <dbReference type="ChEBI" id="CHEBI:29108"/>
    </ligand>
</feature>
<feature type="binding site" description="via 3-oxoalanine" evidence="1">
    <location>
        <position position="95"/>
    </location>
    <ligand>
        <name>Ca(2+)</name>
        <dbReference type="ChEBI" id="CHEBI:29108"/>
    </ligand>
</feature>
<feature type="binding site" evidence="1">
    <location>
        <position position="266"/>
    </location>
    <ligand>
        <name>Ca(2+)</name>
        <dbReference type="ChEBI" id="CHEBI:29108"/>
    </ligand>
</feature>
<feature type="binding site" evidence="1">
    <location>
        <position position="267"/>
    </location>
    <ligand>
        <name>Ca(2+)</name>
        <dbReference type="ChEBI" id="CHEBI:29108"/>
    </ligand>
</feature>
<feature type="modified residue" description="3-oxoalanine (Cys)" evidence="1">
    <location>
        <position position="95"/>
    </location>
</feature>
<sequence length="498" mass="56798">MNSKKTGVIILGCIAFLHIACSGDKKTQAQDTSDSMLEKSSAISEKPNIIFYLADDQDVYDYGCYGNEKVHTPAVDALAKDGILFTNAFTAQAICAPSRSQLFTGKYPLKNGCFANHTGTRSDIKSVTTHMKKLGYEVVLAGKSHVKPENVYQWDREWEPVPKQGVPRDYIPLDSIAAYLKNAKKPFCMFITSKYPHGKYFDVEHPKASDIKFYPFNENKKTDKTFIKTKAGYYRSIEEDNTQLEEVLKLVDTYLTDNTLFIYSADHGVSGKFTVKDIGLKVPFVARWPKVIKPGSTSNQLIHYTDVLPTFMEIAGGKFPEDMDGNSFLPLLQGKDVEVNNYVYGVRTNQNILNSEIFPSRMIRDKRYKYIRNFNSIEVVEQNLTGKPNVNYFIERGAKAHKNEPFEELYDLQNDPFEQHNLASNPDYKSIKEKLIKDMFSWMKAQGDILSENMIGIPIITPKGNRGFKLDQDTPRRKIPEARKNTLTKDDYIVIEHW</sequence>